<feature type="signal peptide" evidence="3">
    <location>
        <begin position="1"/>
        <end position="27"/>
    </location>
</feature>
<feature type="propeptide" id="PRO_0000405012" evidence="3 5">
    <location>
        <begin position="28"/>
        <end position="39"/>
    </location>
</feature>
<feature type="chain" id="PRO_0000405013" description="Pectate trisaccharide-lyase" evidence="5">
    <location>
        <begin position="40"/>
        <end position="341"/>
    </location>
</feature>
<feature type="repeat" description="PbH1 1" evidence="3">
    <location>
        <begin position="131"/>
        <end position="156"/>
    </location>
</feature>
<feature type="repeat" description="PbH1 2" evidence="3">
    <location>
        <begin position="158"/>
        <end position="186"/>
    </location>
</feature>
<feature type="repeat" description="PbH1 3" evidence="3">
    <location>
        <begin position="262"/>
        <end position="283"/>
    </location>
</feature>
<feature type="repeat" description="PbH1 4" evidence="3">
    <location>
        <begin position="287"/>
        <end position="322"/>
    </location>
</feature>
<feature type="active site" evidence="2">
    <location>
        <position position="233"/>
    </location>
</feature>
<feature type="binding site" evidence="2">
    <location>
        <position position="150"/>
    </location>
    <ligand>
        <name>Ca(2+)</name>
        <dbReference type="ChEBI" id="CHEBI:29108"/>
    </ligand>
</feature>
<feature type="binding site" evidence="2">
    <location>
        <position position="180"/>
    </location>
    <ligand>
        <name>Ca(2+)</name>
        <dbReference type="ChEBI" id="CHEBI:29108"/>
    </ligand>
</feature>
<feature type="binding site" evidence="2">
    <location>
        <position position="184"/>
    </location>
    <ligand>
        <name>Ca(2+)</name>
        <dbReference type="ChEBI" id="CHEBI:29108"/>
    </ligand>
</feature>
<name>PTLY_BACLI</name>
<dbReference type="EC" id="4.2.2.22"/>
<dbReference type="EMBL" id="AJ517194">
    <property type="protein sequence ID" value="CAD56882.1"/>
    <property type="molecule type" value="Genomic_DNA"/>
</dbReference>
<dbReference type="RefSeq" id="WP_003186388.1">
    <property type="nucleotide sequence ID" value="NZ_BEXU01000002.1"/>
</dbReference>
<dbReference type="SMR" id="Q8GCB2"/>
<dbReference type="CAZy" id="PL1">
    <property type="family name" value="Polysaccharide Lyase Family 1"/>
</dbReference>
<dbReference type="GeneID" id="92859299"/>
<dbReference type="PATRIC" id="fig|1402.62.peg.577"/>
<dbReference type="OMA" id="DNTQYVT"/>
<dbReference type="BRENDA" id="4.2.2.22">
    <property type="organism ID" value="669"/>
</dbReference>
<dbReference type="GO" id="GO:0005576">
    <property type="term" value="C:extracellular region"/>
    <property type="evidence" value="ECO:0007669"/>
    <property type="project" value="UniProtKB-SubCell"/>
</dbReference>
<dbReference type="GO" id="GO:0046872">
    <property type="term" value="F:metal ion binding"/>
    <property type="evidence" value="ECO:0007669"/>
    <property type="project" value="UniProtKB-KW"/>
</dbReference>
<dbReference type="GO" id="GO:0030570">
    <property type="term" value="F:pectate lyase activity"/>
    <property type="evidence" value="ECO:0007669"/>
    <property type="project" value="InterPro"/>
</dbReference>
<dbReference type="GO" id="GO:0071555">
    <property type="term" value="P:cell wall organization"/>
    <property type="evidence" value="ECO:0007669"/>
    <property type="project" value="UniProtKB-KW"/>
</dbReference>
<dbReference type="GO" id="GO:0000272">
    <property type="term" value="P:polysaccharide catabolic process"/>
    <property type="evidence" value="ECO:0007669"/>
    <property type="project" value="UniProtKB-KW"/>
</dbReference>
<dbReference type="Gene3D" id="2.160.20.10">
    <property type="entry name" value="Single-stranded right-handed beta-helix, Pectin lyase-like"/>
    <property type="match status" value="1"/>
</dbReference>
<dbReference type="InterPro" id="IPR002022">
    <property type="entry name" value="Pec_lyase"/>
</dbReference>
<dbReference type="InterPro" id="IPR012334">
    <property type="entry name" value="Pectin_lyas_fold"/>
</dbReference>
<dbReference type="InterPro" id="IPR011050">
    <property type="entry name" value="Pectin_lyase_fold/virulence"/>
</dbReference>
<dbReference type="InterPro" id="IPR045032">
    <property type="entry name" value="PEL"/>
</dbReference>
<dbReference type="PANTHER" id="PTHR31683">
    <property type="entry name" value="PECTATE LYASE 18-RELATED"/>
    <property type="match status" value="1"/>
</dbReference>
<dbReference type="PANTHER" id="PTHR31683:SF18">
    <property type="entry name" value="PECTATE LYASE 21-RELATED"/>
    <property type="match status" value="1"/>
</dbReference>
<dbReference type="Pfam" id="PF00544">
    <property type="entry name" value="Pectate_lyase_4"/>
    <property type="match status" value="1"/>
</dbReference>
<dbReference type="SMART" id="SM00656">
    <property type="entry name" value="Amb_all"/>
    <property type="match status" value="1"/>
</dbReference>
<dbReference type="SUPFAM" id="SSF51126">
    <property type="entry name" value="Pectin lyase-like"/>
    <property type="match status" value="1"/>
</dbReference>
<protein>
    <recommendedName>
        <fullName>Pectate trisaccharide-lyase</fullName>
        <ecNumber>4.2.2.22</ecNumber>
    </recommendedName>
    <alternativeName>
        <fullName evidence="7">Exopolygalacturonate lyase</fullName>
    </alternativeName>
    <alternativeName>
        <fullName evidence="6 9">Pectate lyase A</fullName>
        <shortName evidence="6">PelA</shortName>
    </alternativeName>
</protein>
<evidence type="ECO:0000250" key="1">
    <source>
        <dbReference type="UniProtKB" id="B1B6T1"/>
    </source>
</evidence>
<evidence type="ECO:0000250" key="2">
    <source>
        <dbReference type="UniProtKB" id="P39116"/>
    </source>
</evidence>
<evidence type="ECO:0000255" key="3"/>
<evidence type="ECO:0000269" key="4">
    <source>
    </source>
</evidence>
<evidence type="ECO:0000269" key="5">
    <source ref="2"/>
</evidence>
<evidence type="ECO:0000303" key="6">
    <source>
    </source>
</evidence>
<evidence type="ECO:0000303" key="7">
    <source ref="2"/>
</evidence>
<evidence type="ECO:0000305" key="8"/>
<evidence type="ECO:0000312" key="9">
    <source>
        <dbReference type="EMBL" id="CAD56882.1"/>
    </source>
</evidence>
<comment type="function">
    <text evidence="1 4 5">Cleaves unsaturated oligo-galacturonides from pectin. The major product is trigalacturonate; digalacturonate and tetragalacturonate are also produced. Activity on methylated pectins decreases with an increasing degree of methylation.</text>
</comment>
<comment type="catalytic activity">
    <reaction evidence="4 5">
        <text>eliminative cleavage of unsaturated trigalacturonate as the major product from the reducing end of polygalacturonic acid/pectate.</text>
        <dbReference type="EC" id="4.2.2.22"/>
    </reaction>
</comment>
<comment type="cofactor">
    <cofactor evidence="5">
        <name>Ca(2+)</name>
        <dbReference type="ChEBI" id="CHEBI:29108"/>
    </cofactor>
</comment>
<comment type="activity regulation">
    <text evidence="4 5">Inhibited by excess substrate. Inhibited by EDTA.</text>
</comment>
<comment type="biophysicochemical properties">
    <phDependence>
        <text evidence="5">Optimum pH is 11.0. Stable from pH 7.0 to 11.0.</text>
    </phDependence>
    <temperatureDependence>
        <text evidence="5">Optimum temperature is 69 degrees Celsius. Thermostable, retains 100% of activity after 2 hours incubation at 65 degrees Celsius.</text>
    </temperatureDependence>
</comment>
<comment type="subcellular location">
    <subcellularLocation>
        <location evidence="8">Secreted</location>
    </subcellularLocation>
</comment>
<comment type="similarity">
    <text evidence="3">Belongs to the polysaccharide lyase 1 family.</text>
</comment>
<reference evidence="8 9" key="1">
    <citation type="journal article" date="2004" name="Appl. Microbiol. Biotechnol.">
        <title>Cloning of the pelA gene from Bacillus licheniformis 14A and biochemical characterization of recombinant, thermostable, high-alkaline pectate lyase.</title>
        <authorList>
            <person name="Berensmeier S."/>
            <person name="Singh S.A."/>
            <person name="Meens J."/>
            <person name="Buchholz K."/>
        </authorList>
    </citation>
    <scope>NUCLEOTIDE SEQUENCE [GENOMIC DNA]</scope>
    <scope>FUNCTION</scope>
    <scope>CATALYTIC ACTIVITY</scope>
    <scope>ACTIVITY REGULATION</scope>
    <source>
        <strain evidence="4">14A</strain>
    </source>
</reference>
<reference evidence="8" key="2">
    <citation type="journal article" date="1999" name="Enzyme Microb. Technol.">
        <title>Exopolygalacturonate lyase from a thermophilic Bacillus sp.</title>
        <authorList>
            <person name="Singh S.A."/>
            <person name="Plattner H."/>
            <person name="Diekmann H."/>
        </authorList>
    </citation>
    <scope>PROTEIN SEQUENCE OF 40-57; 205-218 AND 243-249</scope>
    <scope>FUNCTION</scope>
    <scope>CATALYTIC ACTIVITY</scope>
    <scope>COFACTOR</scope>
    <scope>ACTIVITY REGULATION</scope>
    <scope>BIOPHYSICOCHEMICAL PROPERTIES</scope>
    <source>
        <strain evidence="5">14A</strain>
    </source>
</reference>
<proteinExistence type="evidence at protein level"/>
<keyword id="KW-0106">Calcium</keyword>
<keyword id="KW-0119">Carbohydrate metabolism</keyword>
<keyword id="KW-0961">Cell wall biogenesis/degradation</keyword>
<keyword id="KW-0903">Direct protein sequencing</keyword>
<keyword id="KW-0456">Lyase</keyword>
<keyword id="KW-0479">Metal-binding</keyword>
<keyword id="KW-0624">Polysaccharide degradation</keyword>
<keyword id="KW-0677">Repeat</keyword>
<keyword id="KW-0964">Secreted</keyword>
<keyword id="KW-0732">Signal</keyword>
<gene>
    <name evidence="6" type="primary">pelA</name>
    <name evidence="9" type="synonym">pel</name>
</gene>
<organism>
    <name type="scientific">Bacillus licheniformis</name>
    <dbReference type="NCBI Taxonomy" id="1402"/>
    <lineage>
        <taxon>Bacteria</taxon>
        <taxon>Bacillati</taxon>
        <taxon>Bacillota</taxon>
        <taxon>Bacilli</taxon>
        <taxon>Bacillales</taxon>
        <taxon>Bacillaceae</taxon>
        <taxon>Bacillus</taxon>
    </lineage>
</organism>
<sequence length="341" mass="37365">MKKLISIIFIFVLGVVGSLTAAVSAEAASALNSGKVNPLADFSLKGFAALNGGTTGGEGGQTVTVTTGDQLIAALKNKNANTPLKIYVNGTITTSNTSASKIDVKDVSNVSIVGSGTKGELKGIGIKIWRANNIIIRNLKIHEVASGDKDAIGIEGPSKNIWVDHNELYHSLNVDKDYYDGLFDVKRDAEYITFSWNYVHDGWKSMLMGSSDSDNYNRTITFHHNWFENLNSRVPSFRFGEGHIYNNYFNKIIDSGINSRMGARIRIENNLFENAKDPIVSWYSSSPGYWHVSNNKFVNSRGSMPTTSTTTYNPPYSYSLDNVDNVKSIVKQNAGVGKINP</sequence>
<accession>Q8GCB2</accession>